<sequence length="119" mass="13772">MDYEFLRDLTGQVLVKFSMGHEVIGHWLNEEIKGDLVKLDHIETAADGVRGSERQWQLPGHEYTLWLDGEEVMVRANQLDLDGDEMEEGMNYYDEESLCLCGLEDFLLVLKGYRAFITQ</sequence>
<evidence type="ECO:0000255" key="1">
    <source>
        <dbReference type="HAMAP-Rule" id="MF_01053"/>
    </source>
</evidence>
<accession>B1JK49</accession>
<proteinExistence type="inferred from homology"/>
<name>Y3486_YERPY</name>
<organism>
    <name type="scientific">Yersinia pseudotuberculosis serotype O:3 (strain YPIII)</name>
    <dbReference type="NCBI Taxonomy" id="502800"/>
    <lineage>
        <taxon>Bacteria</taxon>
        <taxon>Pseudomonadati</taxon>
        <taxon>Pseudomonadota</taxon>
        <taxon>Gammaproteobacteria</taxon>
        <taxon>Enterobacterales</taxon>
        <taxon>Yersiniaceae</taxon>
        <taxon>Yersinia</taxon>
    </lineage>
</organism>
<gene>
    <name type="ordered locus">YPK_3486</name>
</gene>
<comment type="similarity">
    <text evidence="1">Belongs to the UPF0231 family.</text>
</comment>
<reference key="1">
    <citation type="submission" date="2008-02" db="EMBL/GenBank/DDBJ databases">
        <title>Complete sequence of Yersinia pseudotuberculosis YPIII.</title>
        <authorList>
            <consortium name="US DOE Joint Genome Institute"/>
            <person name="Copeland A."/>
            <person name="Lucas S."/>
            <person name="Lapidus A."/>
            <person name="Glavina del Rio T."/>
            <person name="Dalin E."/>
            <person name="Tice H."/>
            <person name="Bruce D."/>
            <person name="Goodwin L."/>
            <person name="Pitluck S."/>
            <person name="Munk A.C."/>
            <person name="Brettin T."/>
            <person name="Detter J.C."/>
            <person name="Han C."/>
            <person name="Tapia R."/>
            <person name="Schmutz J."/>
            <person name="Larimer F."/>
            <person name="Land M."/>
            <person name="Hauser L."/>
            <person name="Challacombe J.F."/>
            <person name="Green L."/>
            <person name="Lindler L.E."/>
            <person name="Nikolich M.P."/>
            <person name="Richardson P."/>
        </authorList>
    </citation>
    <scope>NUCLEOTIDE SEQUENCE [LARGE SCALE GENOMIC DNA]</scope>
    <source>
        <strain>YPIII</strain>
    </source>
</reference>
<protein>
    <recommendedName>
        <fullName evidence="1">UPF0231 protein YPK_3486</fullName>
    </recommendedName>
</protein>
<feature type="chain" id="PRO_1000136313" description="UPF0231 protein YPK_3486">
    <location>
        <begin position="1"/>
        <end position="119"/>
    </location>
</feature>
<dbReference type="EMBL" id="CP000950">
    <property type="protein sequence ID" value="ACA69753.1"/>
    <property type="molecule type" value="Genomic_DNA"/>
</dbReference>
<dbReference type="SMR" id="B1JK49"/>
<dbReference type="KEGG" id="ypy:YPK_3486"/>
<dbReference type="PATRIC" id="fig|502800.11.peg.4228"/>
<dbReference type="HAMAP" id="MF_01053">
    <property type="entry name" value="UPF0231"/>
    <property type="match status" value="1"/>
</dbReference>
<dbReference type="InterPro" id="IPR008249">
    <property type="entry name" value="UPF0231"/>
</dbReference>
<dbReference type="NCBIfam" id="NF003574">
    <property type="entry name" value="PRK05248.1-1"/>
    <property type="match status" value="1"/>
</dbReference>
<dbReference type="NCBIfam" id="NF003576">
    <property type="entry name" value="PRK05248.1-3"/>
    <property type="match status" value="1"/>
</dbReference>
<dbReference type="Pfam" id="PF06062">
    <property type="entry name" value="UPF0231"/>
    <property type="match status" value="1"/>
</dbReference>
<dbReference type="PIRSF" id="PIRSF006287">
    <property type="entry name" value="UCP006287"/>
    <property type="match status" value="1"/>
</dbReference>